<accession>Q1QL03</accession>
<evidence type="ECO:0000255" key="1">
    <source>
        <dbReference type="HAMAP-Rule" id="MF_00141"/>
    </source>
</evidence>
<feature type="chain" id="PRO_1000010792" description="Elongation factor P">
    <location>
        <begin position="1"/>
        <end position="188"/>
    </location>
</feature>
<comment type="function">
    <text evidence="1">Involved in peptide bond synthesis. Stimulates efficient translation and peptide-bond synthesis on native or reconstituted 70S ribosomes in vitro. Probably functions indirectly by altering the affinity of the ribosome for aminoacyl-tRNA, thus increasing their reactivity as acceptors for peptidyl transferase.</text>
</comment>
<comment type="pathway">
    <text evidence="1">Protein biosynthesis; polypeptide chain elongation.</text>
</comment>
<comment type="subcellular location">
    <subcellularLocation>
        <location evidence="1">Cytoplasm</location>
    </subcellularLocation>
</comment>
<comment type="similarity">
    <text evidence="1">Belongs to the elongation factor P family.</text>
</comment>
<reference key="1">
    <citation type="submission" date="2006-03" db="EMBL/GenBank/DDBJ databases">
        <title>Complete sequence of chromosome of Nitrobacter hamburgensis X14.</title>
        <authorList>
            <consortium name="US DOE Joint Genome Institute"/>
            <person name="Copeland A."/>
            <person name="Lucas S."/>
            <person name="Lapidus A."/>
            <person name="Barry K."/>
            <person name="Detter J.C."/>
            <person name="Glavina del Rio T."/>
            <person name="Hammon N."/>
            <person name="Israni S."/>
            <person name="Dalin E."/>
            <person name="Tice H."/>
            <person name="Pitluck S."/>
            <person name="Chain P."/>
            <person name="Malfatti S."/>
            <person name="Shin M."/>
            <person name="Vergez L."/>
            <person name="Schmutz J."/>
            <person name="Larimer F."/>
            <person name="Land M."/>
            <person name="Hauser L."/>
            <person name="Kyrpides N."/>
            <person name="Ivanova N."/>
            <person name="Ward B."/>
            <person name="Arp D."/>
            <person name="Klotz M."/>
            <person name="Stein L."/>
            <person name="O'Mullan G."/>
            <person name="Starkenburg S."/>
            <person name="Sayavedra L."/>
            <person name="Poret-Peterson A.T."/>
            <person name="Gentry M.E."/>
            <person name="Bruce D."/>
            <person name="Richardson P."/>
        </authorList>
    </citation>
    <scope>NUCLEOTIDE SEQUENCE [LARGE SCALE GENOMIC DNA]</scope>
    <source>
        <strain>DSM 10229 / NCIMB 13809 / X14</strain>
    </source>
</reference>
<name>EFP_NITHX</name>
<sequence length="188" mass="20860">MRVIASSIRKGNVIEQDGKLYVVLTAENIHPGKGTPVSQIEMRRISDGVKISERYKTTDQVERATIEDHNFTFLYEDADGFHFMNAENYDQVQVPKDVVGNVAPYLQENMVVKLSLHEMVPVAITLPQRVTLEVVETEPVTKGQTASSSYKPAMLSNGVRTGVPPHVAVGTRIVVMTEDGSYVERAKD</sequence>
<organism>
    <name type="scientific">Nitrobacter hamburgensis (strain DSM 10229 / NCIMB 13809 / X14)</name>
    <dbReference type="NCBI Taxonomy" id="323097"/>
    <lineage>
        <taxon>Bacteria</taxon>
        <taxon>Pseudomonadati</taxon>
        <taxon>Pseudomonadota</taxon>
        <taxon>Alphaproteobacteria</taxon>
        <taxon>Hyphomicrobiales</taxon>
        <taxon>Nitrobacteraceae</taxon>
        <taxon>Nitrobacter</taxon>
    </lineage>
</organism>
<gene>
    <name evidence="1" type="primary">efp</name>
    <name type="ordered locus">Nham_2302</name>
</gene>
<protein>
    <recommendedName>
        <fullName evidence="1">Elongation factor P</fullName>
        <shortName evidence="1">EF-P</shortName>
    </recommendedName>
</protein>
<proteinExistence type="inferred from homology"/>
<keyword id="KW-0963">Cytoplasm</keyword>
<keyword id="KW-0251">Elongation factor</keyword>
<keyword id="KW-0648">Protein biosynthesis</keyword>
<keyword id="KW-1185">Reference proteome</keyword>
<dbReference type="EMBL" id="CP000319">
    <property type="protein sequence ID" value="ABE63094.1"/>
    <property type="molecule type" value="Genomic_DNA"/>
</dbReference>
<dbReference type="RefSeq" id="WP_011510771.1">
    <property type="nucleotide sequence ID" value="NC_007964.1"/>
</dbReference>
<dbReference type="SMR" id="Q1QL03"/>
<dbReference type="STRING" id="323097.Nham_2302"/>
<dbReference type="KEGG" id="nha:Nham_2302"/>
<dbReference type="eggNOG" id="COG0231">
    <property type="taxonomic scope" value="Bacteria"/>
</dbReference>
<dbReference type="HOGENOM" id="CLU_074944_1_1_5"/>
<dbReference type="OrthoDB" id="9801844at2"/>
<dbReference type="UniPathway" id="UPA00345"/>
<dbReference type="Proteomes" id="UP000001953">
    <property type="component" value="Chromosome"/>
</dbReference>
<dbReference type="GO" id="GO:0005737">
    <property type="term" value="C:cytoplasm"/>
    <property type="evidence" value="ECO:0007669"/>
    <property type="project" value="UniProtKB-SubCell"/>
</dbReference>
<dbReference type="GO" id="GO:0003746">
    <property type="term" value="F:translation elongation factor activity"/>
    <property type="evidence" value="ECO:0007669"/>
    <property type="project" value="UniProtKB-UniRule"/>
</dbReference>
<dbReference type="GO" id="GO:0043043">
    <property type="term" value="P:peptide biosynthetic process"/>
    <property type="evidence" value="ECO:0007669"/>
    <property type="project" value="InterPro"/>
</dbReference>
<dbReference type="CDD" id="cd04470">
    <property type="entry name" value="S1_EF-P_repeat_1"/>
    <property type="match status" value="1"/>
</dbReference>
<dbReference type="CDD" id="cd05794">
    <property type="entry name" value="S1_EF-P_repeat_2"/>
    <property type="match status" value="1"/>
</dbReference>
<dbReference type="FunFam" id="2.40.50.140:FF:000004">
    <property type="entry name" value="Elongation factor P"/>
    <property type="match status" value="1"/>
</dbReference>
<dbReference type="FunFam" id="2.40.50.140:FF:000009">
    <property type="entry name" value="Elongation factor P"/>
    <property type="match status" value="1"/>
</dbReference>
<dbReference type="Gene3D" id="2.30.30.30">
    <property type="match status" value="1"/>
</dbReference>
<dbReference type="Gene3D" id="2.40.50.140">
    <property type="entry name" value="Nucleic acid-binding proteins"/>
    <property type="match status" value="2"/>
</dbReference>
<dbReference type="HAMAP" id="MF_00141">
    <property type="entry name" value="EF_P"/>
    <property type="match status" value="1"/>
</dbReference>
<dbReference type="InterPro" id="IPR015365">
    <property type="entry name" value="Elong-fact-P_C"/>
</dbReference>
<dbReference type="InterPro" id="IPR012340">
    <property type="entry name" value="NA-bd_OB-fold"/>
</dbReference>
<dbReference type="InterPro" id="IPR014722">
    <property type="entry name" value="Rib_uL2_dom2"/>
</dbReference>
<dbReference type="InterPro" id="IPR020599">
    <property type="entry name" value="Transl_elong_fac_P/YeiP"/>
</dbReference>
<dbReference type="InterPro" id="IPR013185">
    <property type="entry name" value="Transl_elong_KOW-like"/>
</dbReference>
<dbReference type="InterPro" id="IPR001059">
    <property type="entry name" value="Transl_elong_P/YeiP_cen"/>
</dbReference>
<dbReference type="InterPro" id="IPR013852">
    <property type="entry name" value="Transl_elong_P/YeiP_CS"/>
</dbReference>
<dbReference type="InterPro" id="IPR011768">
    <property type="entry name" value="Transl_elongation_fac_P"/>
</dbReference>
<dbReference type="InterPro" id="IPR008991">
    <property type="entry name" value="Translation_prot_SH3-like_sf"/>
</dbReference>
<dbReference type="NCBIfam" id="TIGR00038">
    <property type="entry name" value="efp"/>
    <property type="match status" value="1"/>
</dbReference>
<dbReference type="NCBIfam" id="NF001810">
    <property type="entry name" value="PRK00529.1"/>
    <property type="match status" value="1"/>
</dbReference>
<dbReference type="PANTHER" id="PTHR30053">
    <property type="entry name" value="ELONGATION FACTOR P"/>
    <property type="match status" value="1"/>
</dbReference>
<dbReference type="PANTHER" id="PTHR30053:SF14">
    <property type="entry name" value="TRANSLATION ELONGATION FACTOR KOW-LIKE DOMAIN-CONTAINING PROTEIN"/>
    <property type="match status" value="1"/>
</dbReference>
<dbReference type="Pfam" id="PF01132">
    <property type="entry name" value="EFP"/>
    <property type="match status" value="1"/>
</dbReference>
<dbReference type="Pfam" id="PF08207">
    <property type="entry name" value="EFP_N"/>
    <property type="match status" value="1"/>
</dbReference>
<dbReference type="Pfam" id="PF09285">
    <property type="entry name" value="Elong-fact-P_C"/>
    <property type="match status" value="1"/>
</dbReference>
<dbReference type="PIRSF" id="PIRSF005901">
    <property type="entry name" value="EF-P"/>
    <property type="match status" value="1"/>
</dbReference>
<dbReference type="SMART" id="SM01185">
    <property type="entry name" value="EFP"/>
    <property type="match status" value="1"/>
</dbReference>
<dbReference type="SMART" id="SM00841">
    <property type="entry name" value="Elong-fact-P_C"/>
    <property type="match status" value="1"/>
</dbReference>
<dbReference type="SUPFAM" id="SSF50249">
    <property type="entry name" value="Nucleic acid-binding proteins"/>
    <property type="match status" value="2"/>
</dbReference>
<dbReference type="SUPFAM" id="SSF50104">
    <property type="entry name" value="Translation proteins SH3-like domain"/>
    <property type="match status" value="1"/>
</dbReference>
<dbReference type="PROSITE" id="PS01275">
    <property type="entry name" value="EFP"/>
    <property type="match status" value="1"/>
</dbReference>